<evidence type="ECO:0000255" key="1">
    <source>
        <dbReference type="HAMAP-Rule" id="MF_00648"/>
    </source>
</evidence>
<reference key="1">
    <citation type="submission" date="2009-07" db="EMBL/GenBank/DDBJ databases">
        <title>Complete sequence of Pectobacterium carotovorum subsp. carotovorum PC1.</title>
        <authorList>
            <consortium name="US DOE Joint Genome Institute"/>
            <person name="Lucas S."/>
            <person name="Copeland A."/>
            <person name="Lapidus A."/>
            <person name="Glavina del Rio T."/>
            <person name="Tice H."/>
            <person name="Bruce D."/>
            <person name="Goodwin L."/>
            <person name="Pitluck S."/>
            <person name="Munk A.C."/>
            <person name="Brettin T."/>
            <person name="Detter J.C."/>
            <person name="Han C."/>
            <person name="Tapia R."/>
            <person name="Larimer F."/>
            <person name="Land M."/>
            <person name="Hauser L."/>
            <person name="Kyrpides N."/>
            <person name="Mikhailova N."/>
            <person name="Balakrishnan V."/>
            <person name="Glasner J."/>
            <person name="Perna N.T."/>
        </authorList>
    </citation>
    <scope>NUCLEOTIDE SEQUENCE [LARGE SCALE GENOMIC DNA]</scope>
    <source>
        <strain>PC1</strain>
    </source>
</reference>
<protein>
    <recommendedName>
        <fullName evidence="1">Inosine/xanthosine triphosphatase</fullName>
        <shortName evidence="1">ITPase/XTPase</shortName>
        <ecNumber evidence="1">3.6.1.73</ecNumber>
    </recommendedName>
    <alternativeName>
        <fullName evidence="1">Non-canonical purine NTP phosphatase</fullName>
    </alternativeName>
    <alternativeName>
        <fullName evidence="1">Non-standard purine NTP phosphatase</fullName>
    </alternativeName>
    <alternativeName>
        <fullName evidence="1">Nucleoside-triphosphate phosphatase</fullName>
        <shortName evidence="1">NTPase</shortName>
    </alternativeName>
</protein>
<dbReference type="EC" id="3.6.1.73" evidence="1"/>
<dbReference type="EMBL" id="CP001657">
    <property type="protein sequence ID" value="ACT14690.1"/>
    <property type="molecule type" value="Genomic_DNA"/>
</dbReference>
<dbReference type="SMR" id="C6DF26"/>
<dbReference type="STRING" id="561230.PC1_3675"/>
<dbReference type="KEGG" id="pct:PC1_3675"/>
<dbReference type="eggNOG" id="COG1986">
    <property type="taxonomic scope" value="Bacteria"/>
</dbReference>
<dbReference type="HOGENOM" id="CLU_087417_1_0_6"/>
<dbReference type="OrthoDB" id="6334099at2"/>
<dbReference type="Proteomes" id="UP000002736">
    <property type="component" value="Chromosome"/>
</dbReference>
<dbReference type="GO" id="GO:0103023">
    <property type="term" value="F:ITPase activity"/>
    <property type="evidence" value="ECO:0007669"/>
    <property type="project" value="UniProtKB-EC"/>
</dbReference>
<dbReference type="GO" id="GO:0046872">
    <property type="term" value="F:metal ion binding"/>
    <property type="evidence" value="ECO:0007669"/>
    <property type="project" value="UniProtKB-KW"/>
</dbReference>
<dbReference type="GO" id="GO:0000166">
    <property type="term" value="F:nucleotide binding"/>
    <property type="evidence" value="ECO:0007669"/>
    <property type="project" value="UniProtKB-KW"/>
</dbReference>
<dbReference type="GO" id="GO:0017111">
    <property type="term" value="F:ribonucleoside triphosphate phosphatase activity"/>
    <property type="evidence" value="ECO:0000250"/>
    <property type="project" value="UniProtKB"/>
</dbReference>
<dbReference type="GO" id="GO:0009117">
    <property type="term" value="P:nucleotide metabolic process"/>
    <property type="evidence" value="ECO:0007669"/>
    <property type="project" value="UniProtKB-KW"/>
</dbReference>
<dbReference type="GO" id="GO:0006772">
    <property type="term" value="P:thiamine metabolic process"/>
    <property type="evidence" value="ECO:0007669"/>
    <property type="project" value="TreeGrafter"/>
</dbReference>
<dbReference type="FunFam" id="3.90.950.10:FF:000002">
    <property type="entry name" value="Inosine/xanthosine triphosphatase"/>
    <property type="match status" value="1"/>
</dbReference>
<dbReference type="Gene3D" id="3.90.950.10">
    <property type="match status" value="1"/>
</dbReference>
<dbReference type="HAMAP" id="MF_00648">
    <property type="entry name" value="Non_canon_purine_NTPase_YjjX"/>
    <property type="match status" value="1"/>
</dbReference>
<dbReference type="InterPro" id="IPR029001">
    <property type="entry name" value="ITPase-like_fam"/>
</dbReference>
<dbReference type="InterPro" id="IPR002786">
    <property type="entry name" value="Non_canon_purine_NTPase"/>
</dbReference>
<dbReference type="InterPro" id="IPR026533">
    <property type="entry name" value="NTPase/PRRC1"/>
</dbReference>
<dbReference type="InterPro" id="IPR050299">
    <property type="entry name" value="YjjX_NTPase"/>
</dbReference>
<dbReference type="NCBIfam" id="TIGR00258">
    <property type="entry name" value="inosine/xanthosine triphosphatase"/>
    <property type="match status" value="1"/>
</dbReference>
<dbReference type="NCBIfam" id="NF003459">
    <property type="entry name" value="PRK05074.1"/>
    <property type="match status" value="1"/>
</dbReference>
<dbReference type="PANTHER" id="PTHR34699">
    <property type="match status" value="1"/>
</dbReference>
<dbReference type="PANTHER" id="PTHR34699:SF2">
    <property type="entry name" value="NON-CANONICAL PURINE NTP PHOSPHATASE_PRRC1 DOMAIN-CONTAINING PROTEIN"/>
    <property type="match status" value="1"/>
</dbReference>
<dbReference type="Pfam" id="PF01931">
    <property type="entry name" value="NTPase_I-T"/>
    <property type="match status" value="1"/>
</dbReference>
<dbReference type="SUPFAM" id="SSF52972">
    <property type="entry name" value="ITPase-like"/>
    <property type="match status" value="1"/>
</dbReference>
<sequence>MYHVVAATTNPAKIKAITLAFTDVFGAENCRIEGVDVDSGVPRQPLGSIETRTGARNRVMMARQVRPEADFWVGVEAGIEESMTFAWMVIENTHLRGESRSASLVLPESILHGIREGRELGDEMERLTGVQNIKHKGGAIGVFTDGKLSRTSVYHQALLLALVPFHNPIYQIPVQAAKP</sequence>
<name>NCPP_PECCP</name>
<gene>
    <name type="ordered locus">PC1_3675</name>
</gene>
<comment type="function">
    <text evidence="1">Phosphatase that hydrolyzes non-canonical purine nucleotides such as XTP and ITP to their respective diphosphate derivatives. Probably excludes non-canonical purines from DNA/RNA precursor pool, thus preventing their incorporation into DNA/RNA and avoiding chromosomal lesions.</text>
</comment>
<comment type="catalytic activity">
    <reaction evidence="1">
        <text>XTP + H2O = XDP + phosphate + H(+)</text>
        <dbReference type="Rhea" id="RHEA:28406"/>
        <dbReference type="ChEBI" id="CHEBI:15377"/>
        <dbReference type="ChEBI" id="CHEBI:15378"/>
        <dbReference type="ChEBI" id="CHEBI:43474"/>
        <dbReference type="ChEBI" id="CHEBI:59884"/>
        <dbReference type="ChEBI" id="CHEBI:61314"/>
        <dbReference type="EC" id="3.6.1.73"/>
    </reaction>
</comment>
<comment type="catalytic activity">
    <reaction evidence="1">
        <text>ITP + H2O = IDP + phosphate + H(+)</text>
        <dbReference type="Rhea" id="RHEA:28330"/>
        <dbReference type="ChEBI" id="CHEBI:15377"/>
        <dbReference type="ChEBI" id="CHEBI:15378"/>
        <dbReference type="ChEBI" id="CHEBI:43474"/>
        <dbReference type="ChEBI" id="CHEBI:58280"/>
        <dbReference type="ChEBI" id="CHEBI:61402"/>
        <dbReference type="EC" id="3.6.1.73"/>
    </reaction>
</comment>
<comment type="cofactor">
    <cofactor evidence="1">
        <name>Mg(2+)</name>
        <dbReference type="ChEBI" id="CHEBI:18420"/>
    </cofactor>
    <cofactor evidence="1">
        <name>Mn(2+)</name>
        <dbReference type="ChEBI" id="CHEBI:29035"/>
    </cofactor>
    <text evidence="1">Binds 1 divalent metal cation per subunit; can use either Mg(2+) or Mn(2+).</text>
</comment>
<comment type="subunit">
    <text evidence="1">Homodimer.</text>
</comment>
<comment type="similarity">
    <text evidence="1">Belongs to the YjjX NTPase family.</text>
</comment>
<organism>
    <name type="scientific">Pectobacterium carotovorum subsp. carotovorum (strain PC1)</name>
    <dbReference type="NCBI Taxonomy" id="561230"/>
    <lineage>
        <taxon>Bacteria</taxon>
        <taxon>Pseudomonadati</taxon>
        <taxon>Pseudomonadota</taxon>
        <taxon>Gammaproteobacteria</taxon>
        <taxon>Enterobacterales</taxon>
        <taxon>Pectobacteriaceae</taxon>
        <taxon>Pectobacterium</taxon>
    </lineage>
</organism>
<feature type="chain" id="PRO_1000212390" description="Inosine/xanthosine triphosphatase">
    <location>
        <begin position="1"/>
        <end position="179"/>
    </location>
</feature>
<feature type="binding site" evidence="1">
    <location>
        <begin position="8"/>
        <end position="13"/>
    </location>
    <ligand>
        <name>substrate</name>
    </ligand>
</feature>
<feature type="binding site" evidence="1">
    <location>
        <position position="38"/>
    </location>
    <ligand>
        <name>Mg(2+)</name>
        <dbReference type="ChEBI" id="CHEBI:18420"/>
    </ligand>
</feature>
<feature type="binding site" evidence="1">
    <location>
        <begin position="68"/>
        <end position="69"/>
    </location>
    <ligand>
        <name>substrate</name>
    </ligand>
</feature>
<feature type="binding site" evidence="1">
    <location>
        <position position="68"/>
    </location>
    <ligand>
        <name>Mg(2+)</name>
        <dbReference type="ChEBI" id="CHEBI:18420"/>
    </ligand>
</feature>
<proteinExistence type="inferred from homology"/>
<accession>C6DF26</accession>
<keyword id="KW-0378">Hydrolase</keyword>
<keyword id="KW-0460">Magnesium</keyword>
<keyword id="KW-0464">Manganese</keyword>
<keyword id="KW-0479">Metal-binding</keyword>
<keyword id="KW-0546">Nucleotide metabolism</keyword>
<keyword id="KW-0547">Nucleotide-binding</keyword>